<accession>Q64521</accession>
<accession>Q3TK51</accession>
<accession>Q3UDY8</accession>
<accession>Q61507</accession>
<accession>Q8CBX6</accession>
<accession>Q8K4U5</accession>
<accession>Q8VDT0</accession>
<accession>Q9ERP0</accession>
<dbReference type="EC" id="1.1.5.3" evidence="2"/>
<dbReference type="EMBL" id="U60987">
    <property type="protein sequence ID" value="AAB50545.1"/>
    <property type="molecule type" value="mRNA"/>
</dbReference>
<dbReference type="EMBL" id="D50430">
    <property type="protein sequence ID" value="BAA08926.1"/>
    <property type="molecule type" value="mRNA"/>
</dbReference>
<dbReference type="EMBL" id="AK034353">
    <property type="protein sequence ID" value="BAC28685.1"/>
    <property type="molecule type" value="mRNA"/>
</dbReference>
<dbReference type="EMBL" id="AK144716">
    <property type="protein sequence ID" value="BAE26028.1"/>
    <property type="molecule type" value="mRNA"/>
</dbReference>
<dbReference type="EMBL" id="AK149851">
    <property type="protein sequence ID" value="BAE29123.1"/>
    <property type="molecule type" value="mRNA"/>
</dbReference>
<dbReference type="EMBL" id="AK167152">
    <property type="protein sequence ID" value="BAE39294.1"/>
    <property type="molecule type" value="mRNA"/>
</dbReference>
<dbReference type="EMBL" id="BC021359">
    <property type="protein sequence ID" value="AAH21359.1"/>
    <property type="molecule type" value="mRNA"/>
</dbReference>
<dbReference type="EMBL" id="AH009802">
    <property type="protein sequence ID" value="AAG12342.1"/>
    <property type="molecule type" value="Genomic_DNA"/>
</dbReference>
<dbReference type="EMBL" id="AB045714">
    <property type="protein sequence ID" value="BAB97201.1"/>
    <property type="molecule type" value="mRNA"/>
</dbReference>
<dbReference type="CCDS" id="CCDS16045.1"/>
<dbReference type="RefSeq" id="NP_001139292.1">
    <property type="nucleotide sequence ID" value="NM_001145820.1"/>
</dbReference>
<dbReference type="RefSeq" id="NP_034404.3">
    <property type="nucleotide sequence ID" value="NM_010274.3"/>
</dbReference>
<dbReference type="SMR" id="Q64521"/>
<dbReference type="BioGRID" id="199894">
    <property type="interactions" value="23"/>
</dbReference>
<dbReference type="FunCoup" id="Q64521">
    <property type="interactions" value="2052"/>
</dbReference>
<dbReference type="IntAct" id="Q64521">
    <property type="interactions" value="2"/>
</dbReference>
<dbReference type="STRING" id="10090.ENSMUSP00000130992"/>
<dbReference type="GlyGen" id="Q64521">
    <property type="glycosylation" value="2 sites, 1 N-linked glycan (1 site), 1 O-linked glycan (1 site)"/>
</dbReference>
<dbReference type="iPTMnet" id="Q64521"/>
<dbReference type="MetOSite" id="Q64521"/>
<dbReference type="PhosphoSitePlus" id="Q64521"/>
<dbReference type="SwissPalm" id="Q64521"/>
<dbReference type="REPRODUCTION-2DPAGE" id="Q64521"/>
<dbReference type="jPOST" id="Q64521"/>
<dbReference type="PaxDb" id="10090-ENSMUSP00000108237"/>
<dbReference type="PeptideAtlas" id="Q64521"/>
<dbReference type="ProteomicsDB" id="271263"/>
<dbReference type="Pumba" id="Q64521"/>
<dbReference type="Antibodypedia" id="2370">
    <property type="antibodies" value="279 antibodies from 30 providers"/>
</dbReference>
<dbReference type="DNASU" id="14571"/>
<dbReference type="Ensembl" id="ENSMUST00000028167.3">
    <property type="protein sequence ID" value="ENSMUSP00000028167.3"/>
    <property type="gene ID" value="ENSMUSG00000026827.13"/>
</dbReference>
<dbReference type="Ensembl" id="ENSMUST00000169687.8">
    <property type="protein sequence ID" value="ENSMUSP00000130992.2"/>
    <property type="gene ID" value="ENSMUSG00000026827.13"/>
</dbReference>
<dbReference type="GeneID" id="14571"/>
<dbReference type="KEGG" id="mmu:14571"/>
<dbReference type="UCSC" id="uc008jsc.2">
    <property type="organism name" value="mouse"/>
</dbReference>
<dbReference type="AGR" id="MGI:99778"/>
<dbReference type="CTD" id="2820"/>
<dbReference type="MGI" id="MGI:99778">
    <property type="gene designation" value="Gpd2"/>
</dbReference>
<dbReference type="VEuPathDB" id="HostDB:ENSMUSG00000026827"/>
<dbReference type="eggNOG" id="KOG0042">
    <property type="taxonomic scope" value="Eukaryota"/>
</dbReference>
<dbReference type="GeneTree" id="ENSGT00390000001718"/>
<dbReference type="InParanoid" id="Q64521"/>
<dbReference type="OMA" id="PHIVKPM"/>
<dbReference type="OrthoDB" id="25396at9989"/>
<dbReference type="BRENDA" id="1.1.5.3">
    <property type="organism ID" value="3474"/>
</dbReference>
<dbReference type="Reactome" id="R-MMU-1483166">
    <property type="pathway name" value="Synthesis of PA"/>
</dbReference>
<dbReference type="Reactome" id="R-MMU-163560">
    <property type="pathway name" value="Triglyceride catabolism"/>
</dbReference>
<dbReference type="UniPathway" id="UPA00618">
    <property type="reaction ID" value="UER00673"/>
</dbReference>
<dbReference type="BioGRID-ORCS" id="14571">
    <property type="hits" value="2 hits in 78 CRISPR screens"/>
</dbReference>
<dbReference type="CD-CODE" id="CE726F99">
    <property type="entry name" value="Postsynaptic density"/>
</dbReference>
<dbReference type="ChiTaRS" id="Gpd2">
    <property type="organism name" value="mouse"/>
</dbReference>
<dbReference type="PRO" id="PR:Q64521"/>
<dbReference type="Proteomes" id="UP000000589">
    <property type="component" value="Chromosome 2"/>
</dbReference>
<dbReference type="RNAct" id="Q64521">
    <property type="molecule type" value="protein"/>
</dbReference>
<dbReference type="Bgee" id="ENSMUSG00000026827">
    <property type="expression patterns" value="Expressed in seminiferous tubule of testis and 273 other cell types or tissues"/>
</dbReference>
<dbReference type="ExpressionAtlas" id="Q64521">
    <property type="expression patterns" value="baseline and differential"/>
</dbReference>
<dbReference type="GO" id="GO:0005743">
    <property type="term" value="C:mitochondrial inner membrane"/>
    <property type="evidence" value="ECO:0000315"/>
    <property type="project" value="MGI"/>
</dbReference>
<dbReference type="GO" id="GO:0005739">
    <property type="term" value="C:mitochondrion"/>
    <property type="evidence" value="ECO:0007005"/>
    <property type="project" value="MGI"/>
</dbReference>
<dbReference type="GO" id="GO:0005509">
    <property type="term" value="F:calcium ion binding"/>
    <property type="evidence" value="ECO:0007669"/>
    <property type="project" value="InterPro"/>
</dbReference>
<dbReference type="GO" id="GO:0004368">
    <property type="term" value="F:glycerol-3-phosphate dehydrogenase (quinone) activity"/>
    <property type="evidence" value="ECO:0000315"/>
    <property type="project" value="MGI"/>
</dbReference>
<dbReference type="GO" id="GO:0043010">
    <property type="term" value="P:camera-type eye development"/>
    <property type="evidence" value="ECO:0000316"/>
    <property type="project" value="MGI"/>
</dbReference>
<dbReference type="GO" id="GO:0006094">
    <property type="term" value="P:gluconeogenesis"/>
    <property type="evidence" value="ECO:0000315"/>
    <property type="project" value="MGI"/>
</dbReference>
<dbReference type="GO" id="GO:0019563">
    <property type="term" value="P:glycerol catabolic process"/>
    <property type="evidence" value="ECO:0007669"/>
    <property type="project" value="UniProtKB-UniPathway"/>
</dbReference>
<dbReference type="GO" id="GO:0006072">
    <property type="term" value="P:glycerol-3-phosphate metabolic process"/>
    <property type="evidence" value="ECO:0000315"/>
    <property type="project" value="MGI"/>
</dbReference>
<dbReference type="GO" id="GO:0006127">
    <property type="term" value="P:glycerol-3-phosphate shuttle"/>
    <property type="evidence" value="ECO:0000315"/>
    <property type="project" value="MGI"/>
</dbReference>
<dbReference type="GO" id="GO:0035264">
    <property type="term" value="P:multicellular organism growth"/>
    <property type="evidence" value="ECO:0000316"/>
    <property type="project" value="MGI"/>
</dbReference>
<dbReference type="CDD" id="cd00051">
    <property type="entry name" value="EFh"/>
    <property type="match status" value="1"/>
</dbReference>
<dbReference type="FunFam" id="1.10.238.10:FF:000155">
    <property type="entry name" value="Glycerol-3-phosphate dehydrogenase"/>
    <property type="match status" value="1"/>
</dbReference>
<dbReference type="FunFam" id="1.10.8.870:FF:000001">
    <property type="entry name" value="Glycerol-3-phosphate dehydrogenase"/>
    <property type="match status" value="1"/>
</dbReference>
<dbReference type="FunFam" id="3.30.9.10:FF:000037">
    <property type="entry name" value="Glycerol-3-phosphate dehydrogenase"/>
    <property type="match status" value="1"/>
</dbReference>
<dbReference type="Gene3D" id="1.10.8.870">
    <property type="entry name" value="Alpha-glycerophosphate oxidase, cap domain"/>
    <property type="match status" value="1"/>
</dbReference>
<dbReference type="Gene3D" id="3.30.9.10">
    <property type="entry name" value="D-Amino Acid Oxidase, subunit A, domain 2"/>
    <property type="match status" value="1"/>
</dbReference>
<dbReference type="Gene3D" id="1.10.238.10">
    <property type="entry name" value="EF-hand"/>
    <property type="match status" value="1"/>
</dbReference>
<dbReference type="Gene3D" id="3.50.50.60">
    <property type="entry name" value="FAD/NAD(P)-binding domain"/>
    <property type="match status" value="1"/>
</dbReference>
<dbReference type="InterPro" id="IPR031656">
    <property type="entry name" value="DAO_C"/>
</dbReference>
<dbReference type="InterPro" id="IPR038299">
    <property type="entry name" value="DAO_C_sf"/>
</dbReference>
<dbReference type="InterPro" id="IPR011992">
    <property type="entry name" value="EF-hand-dom_pair"/>
</dbReference>
<dbReference type="InterPro" id="IPR018247">
    <property type="entry name" value="EF_Hand_1_Ca_BS"/>
</dbReference>
<dbReference type="InterPro" id="IPR002048">
    <property type="entry name" value="EF_hand_dom"/>
</dbReference>
<dbReference type="InterPro" id="IPR006076">
    <property type="entry name" value="FAD-dep_OxRdtase"/>
</dbReference>
<dbReference type="InterPro" id="IPR036188">
    <property type="entry name" value="FAD/NAD-bd_sf"/>
</dbReference>
<dbReference type="InterPro" id="IPR000447">
    <property type="entry name" value="G3P_DH_FAD-dep"/>
</dbReference>
<dbReference type="PANTHER" id="PTHR11985">
    <property type="entry name" value="GLYCEROL-3-PHOSPHATE DEHYDROGENASE"/>
    <property type="match status" value="1"/>
</dbReference>
<dbReference type="PANTHER" id="PTHR11985:SF15">
    <property type="entry name" value="GLYCEROL-3-PHOSPHATE DEHYDROGENASE, MITOCHONDRIAL"/>
    <property type="match status" value="1"/>
</dbReference>
<dbReference type="Pfam" id="PF01266">
    <property type="entry name" value="DAO"/>
    <property type="match status" value="1"/>
</dbReference>
<dbReference type="Pfam" id="PF16901">
    <property type="entry name" value="DAO_C"/>
    <property type="match status" value="1"/>
</dbReference>
<dbReference type="Pfam" id="PF13499">
    <property type="entry name" value="EF-hand_7"/>
    <property type="match status" value="1"/>
</dbReference>
<dbReference type="PRINTS" id="PR01001">
    <property type="entry name" value="FADG3PDH"/>
</dbReference>
<dbReference type="SMART" id="SM00054">
    <property type="entry name" value="EFh"/>
    <property type="match status" value="2"/>
</dbReference>
<dbReference type="SUPFAM" id="SSF47473">
    <property type="entry name" value="EF-hand"/>
    <property type="match status" value="1"/>
</dbReference>
<dbReference type="SUPFAM" id="SSF54373">
    <property type="entry name" value="FAD-linked reductases, C-terminal domain"/>
    <property type="match status" value="1"/>
</dbReference>
<dbReference type="SUPFAM" id="SSF51905">
    <property type="entry name" value="FAD/NAD(P)-binding domain"/>
    <property type="match status" value="1"/>
</dbReference>
<dbReference type="PROSITE" id="PS00018">
    <property type="entry name" value="EF_HAND_1"/>
    <property type="match status" value="1"/>
</dbReference>
<dbReference type="PROSITE" id="PS50222">
    <property type="entry name" value="EF_HAND_2"/>
    <property type="match status" value="2"/>
</dbReference>
<dbReference type="PROSITE" id="PS00977">
    <property type="entry name" value="FAD_G3PDH_1"/>
    <property type="match status" value="1"/>
</dbReference>
<dbReference type="PROSITE" id="PS00978">
    <property type="entry name" value="FAD_G3PDH_2"/>
    <property type="match status" value="1"/>
</dbReference>
<sequence>MAFQKAVKGTILVGGGALATVLGLSPFAHYRRKQVSLAYVEAAGYLTEPVNREPPSREAQLMTLKNTPEFDILVIGGGATGCGCALDAVTRGLKTALVERDDFSSGTSSRSTKLIHGGVRYLQKAIMNLDVEQYRMVKEALHERANLLEIAPHLSAPLPIMLPLYKWWQLPYYWVGIKMYDLVAGSQCLKSSYVLSKSRALEHFPMLQKDKLVGAIVYYDGQHNDARMNLAIALTAARYGAATANYMEVVSLLKKTDPETGKERVSGARCKDVLTGQEFDVRAKCVINASGPFTDSVRKMDDKNVVPICQPSAGVHIVMPGYYSPENMGLLDPATSDGRVIFFLPWEKMTIAGTTDTPTDVTHHPIPSEEDINFILNEVRNYLSSDVEVRRGDVLAAWSGIRPLVTDPKSADTQSISRNHVVDISDSGLITIAGGKWTTYRSMAEDTVDAAVKFHNLNAGPSRTVGLFLQGGKDWSPTLYIRLVQDYGLESEVAQHLAKTYGDKAFEVAKMASVTGKRWPVVGVRLVSEFPYIEAEVKYGIKEYACTAVDMISRRTRLAFLNVQAAEEALPRIVELMGRELNWSELRKQEELETATRFLYYEMGYKSRTEQLTDSTEISLLPSDIDRYKKRFHKFDEDEKGFITIVDVQRVLESINVQMDENTLHEILCEVDLNKNGQVELHEFLQLMSAVQKGRVSGSRLAILMKTAEENLDRRVPIPVDRSCGGL</sequence>
<protein>
    <recommendedName>
        <fullName>Glycerol-3-phosphate dehydrogenase, mitochondrial</fullName>
        <shortName>GPD-M</shortName>
        <shortName>GPDH-M</shortName>
        <ecNumber evidence="2">1.1.5.3</ecNumber>
    </recommendedName>
    <alternativeName>
        <fullName>Protein TISP38</fullName>
    </alternativeName>
</protein>
<comment type="function">
    <text evidence="2">Calcium-responsive mitochondrial glycerol-3-phosphate dehydrogenase which seems to be a key component of the pancreatic beta-cell glucose-sensing device.</text>
</comment>
<comment type="catalytic activity">
    <reaction evidence="2">
        <text>a quinone + sn-glycerol 3-phosphate = dihydroxyacetone phosphate + a quinol</text>
        <dbReference type="Rhea" id="RHEA:18977"/>
        <dbReference type="ChEBI" id="CHEBI:24646"/>
        <dbReference type="ChEBI" id="CHEBI:57597"/>
        <dbReference type="ChEBI" id="CHEBI:57642"/>
        <dbReference type="ChEBI" id="CHEBI:132124"/>
        <dbReference type="EC" id="1.1.5.3"/>
    </reaction>
    <physiologicalReaction direction="left-to-right" evidence="2">
        <dbReference type="Rhea" id="RHEA:18978"/>
    </physiologicalReaction>
</comment>
<comment type="cofactor">
    <cofactor>
        <name>FAD</name>
        <dbReference type="ChEBI" id="CHEBI:57692"/>
    </cofactor>
</comment>
<comment type="activity regulation">
    <text evidence="2">Calcium-binding enhance the activity of the enzyme.</text>
</comment>
<comment type="pathway">
    <text>Polyol metabolism; glycerol degradation via glycerol kinase pathway; glycerone phosphate from sn-glycerol 3-phosphate (anaerobic route): step 1/1.</text>
</comment>
<comment type="subcellular location">
    <subcellularLocation>
        <location>Mitochondrion inner membrane</location>
    </subcellularLocation>
</comment>
<comment type="similarity">
    <text evidence="5">Belongs to the FAD-dependent glycerol-3-phosphate dehydrogenase family.</text>
</comment>
<evidence type="ECO:0000250" key="1"/>
<evidence type="ECO:0000250" key="2">
    <source>
        <dbReference type="UniProtKB" id="P43304"/>
    </source>
</evidence>
<evidence type="ECO:0000255" key="3"/>
<evidence type="ECO:0000255" key="4">
    <source>
        <dbReference type="PROSITE-ProRule" id="PRU00448"/>
    </source>
</evidence>
<evidence type="ECO:0000305" key="5"/>
<evidence type="ECO:0000312" key="6">
    <source>
        <dbReference type="MGI" id="MGI:99778"/>
    </source>
</evidence>
<evidence type="ECO:0007744" key="7">
    <source>
    </source>
</evidence>
<keyword id="KW-0106">Calcium</keyword>
<keyword id="KW-0903">Direct protein sequencing</keyword>
<keyword id="KW-0274">FAD</keyword>
<keyword id="KW-0285">Flavoprotein</keyword>
<keyword id="KW-0472">Membrane</keyword>
<keyword id="KW-0479">Metal-binding</keyword>
<keyword id="KW-0496">Mitochondrion</keyword>
<keyword id="KW-0999">Mitochondrion inner membrane</keyword>
<keyword id="KW-0560">Oxidoreductase</keyword>
<keyword id="KW-0597">Phosphoprotein</keyword>
<keyword id="KW-1185">Reference proteome</keyword>
<keyword id="KW-0677">Repeat</keyword>
<keyword id="KW-0809">Transit peptide</keyword>
<organism>
    <name type="scientific">Mus musculus</name>
    <name type="common">Mouse</name>
    <dbReference type="NCBI Taxonomy" id="10090"/>
    <lineage>
        <taxon>Eukaryota</taxon>
        <taxon>Metazoa</taxon>
        <taxon>Chordata</taxon>
        <taxon>Craniata</taxon>
        <taxon>Vertebrata</taxon>
        <taxon>Euteleostomi</taxon>
        <taxon>Mammalia</taxon>
        <taxon>Eutheria</taxon>
        <taxon>Euarchontoglires</taxon>
        <taxon>Glires</taxon>
        <taxon>Rodentia</taxon>
        <taxon>Myomorpha</taxon>
        <taxon>Muroidea</taxon>
        <taxon>Muridae</taxon>
        <taxon>Murinae</taxon>
        <taxon>Mus</taxon>
        <taxon>Mus</taxon>
    </lineage>
</organism>
<gene>
    <name evidence="6" type="primary">Gpd2</name>
    <name type="synonym">Gdm1</name>
</gene>
<reference key="1">
    <citation type="journal article" date="1996" name="Arch. Biochem. Biophys.">
        <title>Sequence and tissue-dependent RNA expression of mouse FAD-linked glycerol-3-phosphate dehydrogenase.</title>
        <authorList>
            <person name="Koza R.A."/>
            <person name="Kozak U.C."/>
            <person name="Brown L.J."/>
            <person name="Leiter E.H."/>
            <person name="Macdonald M.J."/>
            <person name="Kozak L.P."/>
        </authorList>
    </citation>
    <scope>NUCLEOTIDE SEQUENCE [MRNA]</scope>
    <source>
        <strain>C57BL/6J</strain>
        <tissue>Adipocyte</tissue>
    </source>
</reference>
<reference key="2">
    <citation type="journal article" date="1996" name="Diabetes">
        <title>Effect of mitochondrial and/or cytosolic glycerol 3-phosphate dehydrogenase overexpression on glucose-stimulated insulin secretion from MIN6 and HIT cells.</title>
        <authorList>
            <person name="Ishihara H."/>
            <person name="Nakazaki M."/>
            <person name="Kanegae Y."/>
            <person name="Inukai K."/>
            <person name="Asano T."/>
            <person name="Katagiri H."/>
            <person name="Yazaki Y."/>
            <person name="Kikuchi M."/>
            <person name="Miyazaki J."/>
            <person name="Saito I."/>
            <person name="Oka Y."/>
        </authorList>
    </citation>
    <scope>NUCLEOTIDE SEQUENCE [MRNA]</scope>
    <source>
        <strain>C57BL/6J</strain>
    </source>
</reference>
<reference key="3">
    <citation type="journal article" date="2005" name="Science">
        <title>The transcriptional landscape of the mammalian genome.</title>
        <authorList>
            <person name="Carninci P."/>
            <person name="Kasukawa T."/>
            <person name="Katayama S."/>
            <person name="Gough J."/>
            <person name="Frith M.C."/>
            <person name="Maeda N."/>
            <person name="Oyama R."/>
            <person name="Ravasi T."/>
            <person name="Lenhard B."/>
            <person name="Wells C."/>
            <person name="Kodzius R."/>
            <person name="Shimokawa K."/>
            <person name="Bajic V.B."/>
            <person name="Brenner S.E."/>
            <person name="Batalov S."/>
            <person name="Forrest A.R."/>
            <person name="Zavolan M."/>
            <person name="Davis M.J."/>
            <person name="Wilming L.G."/>
            <person name="Aidinis V."/>
            <person name="Allen J.E."/>
            <person name="Ambesi-Impiombato A."/>
            <person name="Apweiler R."/>
            <person name="Aturaliya R.N."/>
            <person name="Bailey T.L."/>
            <person name="Bansal M."/>
            <person name="Baxter L."/>
            <person name="Beisel K.W."/>
            <person name="Bersano T."/>
            <person name="Bono H."/>
            <person name="Chalk A.M."/>
            <person name="Chiu K.P."/>
            <person name="Choudhary V."/>
            <person name="Christoffels A."/>
            <person name="Clutterbuck D.R."/>
            <person name="Crowe M.L."/>
            <person name="Dalla E."/>
            <person name="Dalrymple B.P."/>
            <person name="de Bono B."/>
            <person name="Della Gatta G."/>
            <person name="di Bernardo D."/>
            <person name="Down T."/>
            <person name="Engstrom P."/>
            <person name="Fagiolini M."/>
            <person name="Faulkner G."/>
            <person name="Fletcher C.F."/>
            <person name="Fukushima T."/>
            <person name="Furuno M."/>
            <person name="Futaki S."/>
            <person name="Gariboldi M."/>
            <person name="Georgii-Hemming P."/>
            <person name="Gingeras T.R."/>
            <person name="Gojobori T."/>
            <person name="Green R.E."/>
            <person name="Gustincich S."/>
            <person name="Harbers M."/>
            <person name="Hayashi Y."/>
            <person name="Hensch T.K."/>
            <person name="Hirokawa N."/>
            <person name="Hill D."/>
            <person name="Huminiecki L."/>
            <person name="Iacono M."/>
            <person name="Ikeo K."/>
            <person name="Iwama A."/>
            <person name="Ishikawa T."/>
            <person name="Jakt M."/>
            <person name="Kanapin A."/>
            <person name="Katoh M."/>
            <person name="Kawasawa Y."/>
            <person name="Kelso J."/>
            <person name="Kitamura H."/>
            <person name="Kitano H."/>
            <person name="Kollias G."/>
            <person name="Krishnan S.P."/>
            <person name="Kruger A."/>
            <person name="Kummerfeld S.K."/>
            <person name="Kurochkin I.V."/>
            <person name="Lareau L.F."/>
            <person name="Lazarevic D."/>
            <person name="Lipovich L."/>
            <person name="Liu J."/>
            <person name="Liuni S."/>
            <person name="McWilliam S."/>
            <person name="Madan Babu M."/>
            <person name="Madera M."/>
            <person name="Marchionni L."/>
            <person name="Matsuda H."/>
            <person name="Matsuzawa S."/>
            <person name="Miki H."/>
            <person name="Mignone F."/>
            <person name="Miyake S."/>
            <person name="Morris K."/>
            <person name="Mottagui-Tabar S."/>
            <person name="Mulder N."/>
            <person name="Nakano N."/>
            <person name="Nakauchi H."/>
            <person name="Ng P."/>
            <person name="Nilsson R."/>
            <person name="Nishiguchi S."/>
            <person name="Nishikawa S."/>
            <person name="Nori F."/>
            <person name="Ohara O."/>
            <person name="Okazaki Y."/>
            <person name="Orlando V."/>
            <person name="Pang K.C."/>
            <person name="Pavan W.J."/>
            <person name="Pavesi G."/>
            <person name="Pesole G."/>
            <person name="Petrovsky N."/>
            <person name="Piazza S."/>
            <person name="Reed J."/>
            <person name="Reid J.F."/>
            <person name="Ring B.Z."/>
            <person name="Ringwald M."/>
            <person name="Rost B."/>
            <person name="Ruan Y."/>
            <person name="Salzberg S.L."/>
            <person name="Sandelin A."/>
            <person name="Schneider C."/>
            <person name="Schoenbach C."/>
            <person name="Sekiguchi K."/>
            <person name="Semple C.A."/>
            <person name="Seno S."/>
            <person name="Sessa L."/>
            <person name="Sheng Y."/>
            <person name="Shibata Y."/>
            <person name="Shimada H."/>
            <person name="Shimada K."/>
            <person name="Silva D."/>
            <person name="Sinclair B."/>
            <person name="Sperling S."/>
            <person name="Stupka E."/>
            <person name="Sugiura K."/>
            <person name="Sultana R."/>
            <person name="Takenaka Y."/>
            <person name="Taki K."/>
            <person name="Tammoja K."/>
            <person name="Tan S.L."/>
            <person name="Tang S."/>
            <person name="Taylor M.S."/>
            <person name="Tegner J."/>
            <person name="Teichmann S.A."/>
            <person name="Ueda H.R."/>
            <person name="van Nimwegen E."/>
            <person name="Verardo R."/>
            <person name="Wei C.L."/>
            <person name="Yagi K."/>
            <person name="Yamanishi H."/>
            <person name="Zabarovsky E."/>
            <person name="Zhu S."/>
            <person name="Zimmer A."/>
            <person name="Hide W."/>
            <person name="Bult C."/>
            <person name="Grimmond S.M."/>
            <person name="Teasdale R.D."/>
            <person name="Liu E.T."/>
            <person name="Brusic V."/>
            <person name="Quackenbush J."/>
            <person name="Wahlestedt C."/>
            <person name="Mattick J.S."/>
            <person name="Hume D.A."/>
            <person name="Kai C."/>
            <person name="Sasaki D."/>
            <person name="Tomaru Y."/>
            <person name="Fukuda S."/>
            <person name="Kanamori-Katayama M."/>
            <person name="Suzuki M."/>
            <person name="Aoki J."/>
            <person name="Arakawa T."/>
            <person name="Iida J."/>
            <person name="Imamura K."/>
            <person name="Itoh M."/>
            <person name="Kato T."/>
            <person name="Kawaji H."/>
            <person name="Kawagashira N."/>
            <person name="Kawashima T."/>
            <person name="Kojima M."/>
            <person name="Kondo S."/>
            <person name="Konno H."/>
            <person name="Nakano K."/>
            <person name="Ninomiya N."/>
            <person name="Nishio T."/>
            <person name="Okada M."/>
            <person name="Plessy C."/>
            <person name="Shibata K."/>
            <person name="Shiraki T."/>
            <person name="Suzuki S."/>
            <person name="Tagami M."/>
            <person name="Waki K."/>
            <person name="Watahiki A."/>
            <person name="Okamura-Oho Y."/>
            <person name="Suzuki H."/>
            <person name="Kawai J."/>
            <person name="Hayashizaki Y."/>
        </authorList>
    </citation>
    <scope>NUCLEOTIDE SEQUENCE [LARGE SCALE MRNA]</scope>
    <source>
        <strain>C57BL/6J</strain>
        <tissue>Bone marrow</tissue>
        <tissue>Diencephalon</tissue>
        <tissue>Lung</tissue>
    </source>
</reference>
<reference key="4">
    <citation type="journal article" date="2004" name="Genome Res.">
        <title>The status, quality, and expansion of the NIH full-length cDNA project: the Mammalian Gene Collection (MGC).</title>
        <authorList>
            <consortium name="The MGC Project Team"/>
        </authorList>
    </citation>
    <scope>NUCLEOTIDE SEQUENCE [LARGE SCALE MRNA]</scope>
    <source>
        <strain>Czech II</strain>
        <tissue>Mammary tumor</tissue>
    </source>
</reference>
<reference key="5">
    <citation type="submission" date="2007-04" db="UniProtKB">
        <authorList>
            <person name="Lubec G."/>
            <person name="Klug S."/>
            <person name="Kang S.U."/>
        </authorList>
    </citation>
    <scope>PROTEIN SEQUENCE OF 58-91; 95-110; 125-135; 167-178; 200-209; 212-254; 285-298; 340-348; 381-390; 392-409; 442-453; 464-473; 483-499; 519-538; 558-579; 598-606; 609-627 AND 635-693</scope>
    <source>
        <strain>C57BL/6J</strain>
        <tissue>Brain</tissue>
        <tissue>Hippocampus</tissue>
    </source>
</reference>
<reference key="6">
    <citation type="submission" date="2000-08" db="EMBL/GenBank/DDBJ databases">
        <title>Genomic sequence of mouse mitochondrial glycerol-3-phosphate dehydrogenase (mGPDH).</title>
        <authorList>
            <person name="Weitzel J.M."/>
        </authorList>
    </citation>
    <scope>NUCLEOTIDE SEQUENCE [GENOMIC DNA] OF 390-686</scope>
    <source>
        <strain>129/Sv</strain>
        <tissue>Liver</tissue>
    </source>
</reference>
<reference key="7">
    <citation type="submission" date="2000-07" db="EMBL/GenBank/DDBJ databases">
        <title>Mus musculus TISP38 mRNA.</title>
        <authorList>
            <person name="Tamura K."/>
            <person name="Nishimune Y."/>
            <person name="Nojima H."/>
        </authorList>
    </citation>
    <scope>NUCLEOTIDE SEQUENCE [MRNA] OF 611-727</scope>
    <source>
        <tissue>Testis</tissue>
    </source>
</reference>
<reference key="8">
    <citation type="journal article" date="2008" name="J. Proteome Res.">
        <title>Large-scale identification and evolution indexing of tyrosine phosphorylation sites from murine brain.</title>
        <authorList>
            <person name="Ballif B.A."/>
            <person name="Carey G.R."/>
            <person name="Sunyaev S.R."/>
            <person name="Gygi S.P."/>
        </authorList>
    </citation>
    <scope>PHOSPHORYLATION [LARGE SCALE ANALYSIS] AT TYR-601</scope>
    <scope>IDENTIFICATION BY MASS SPECTROMETRY [LARGE SCALE ANALYSIS]</scope>
    <source>
        <tissue>Brain</tissue>
    </source>
</reference>
<reference key="9">
    <citation type="journal article" date="2010" name="Cell">
        <title>A tissue-specific atlas of mouse protein phosphorylation and expression.</title>
        <authorList>
            <person name="Huttlin E.L."/>
            <person name="Jedrychowski M.P."/>
            <person name="Elias J.E."/>
            <person name="Goswami T."/>
            <person name="Rad R."/>
            <person name="Beausoleil S.A."/>
            <person name="Villen J."/>
            <person name="Haas W."/>
            <person name="Sowa M.E."/>
            <person name="Gygi S.P."/>
        </authorList>
    </citation>
    <scope>IDENTIFICATION BY MASS SPECTROMETRY [LARGE SCALE ANALYSIS]</scope>
    <source>
        <tissue>Brain</tissue>
        <tissue>Brown adipose tissue</tissue>
        <tissue>Heart</tissue>
        <tissue>Kidney</tissue>
        <tissue>Liver</tissue>
        <tissue>Lung</tissue>
        <tissue>Pancreas</tissue>
        <tissue>Spleen</tissue>
        <tissue>Testis</tissue>
    </source>
</reference>
<feature type="transit peptide" description="Mitochondrion" evidence="1">
    <location>
        <begin position="1"/>
        <end position="42"/>
    </location>
</feature>
<feature type="chain" id="PRO_0000010430" description="Glycerol-3-phosphate dehydrogenase, mitochondrial">
    <location>
        <begin position="43"/>
        <end position="727"/>
    </location>
</feature>
<feature type="domain" description="EF-hand 1" evidence="4">
    <location>
        <begin position="623"/>
        <end position="658"/>
    </location>
</feature>
<feature type="domain" description="EF-hand 2" evidence="4">
    <location>
        <begin position="659"/>
        <end position="694"/>
    </location>
</feature>
<feature type="binding site" evidence="3">
    <location>
        <begin position="71"/>
        <end position="99"/>
    </location>
    <ligand>
        <name>FAD</name>
        <dbReference type="ChEBI" id="CHEBI:57692"/>
    </ligand>
</feature>
<feature type="binding site" evidence="4">
    <location>
        <position position="672"/>
    </location>
    <ligand>
        <name>Ca(2+)</name>
        <dbReference type="ChEBI" id="CHEBI:29108"/>
    </ligand>
</feature>
<feature type="binding site" evidence="4">
    <location>
        <position position="674"/>
    </location>
    <ligand>
        <name>Ca(2+)</name>
        <dbReference type="ChEBI" id="CHEBI:29108"/>
    </ligand>
</feature>
<feature type="binding site" evidence="4">
    <location>
        <position position="676"/>
    </location>
    <ligand>
        <name>Ca(2+)</name>
        <dbReference type="ChEBI" id="CHEBI:29108"/>
    </ligand>
</feature>
<feature type="binding site" evidence="4">
    <location>
        <position position="678"/>
    </location>
    <ligand>
        <name>Ca(2+)</name>
        <dbReference type="ChEBI" id="CHEBI:29108"/>
    </ligand>
</feature>
<feature type="binding site" evidence="4">
    <location>
        <position position="683"/>
    </location>
    <ligand>
        <name>Ca(2+)</name>
        <dbReference type="ChEBI" id="CHEBI:29108"/>
    </ligand>
</feature>
<feature type="modified residue" description="Phosphotyrosine" evidence="7">
    <location>
        <position position="601"/>
    </location>
</feature>
<feature type="sequence conflict" description="In Ref. 1; AAB50545 and 4; AAH21359." evidence="5" ref="1 4">
    <original>P</original>
    <variation>Q</variation>
    <location>
        <position position="26"/>
    </location>
</feature>
<feature type="sequence conflict" description="In Ref. 3; BAC28685." evidence="5" ref="3">
    <location>
        <position position="42"/>
    </location>
</feature>
<feature type="sequence conflict" description="In Ref. 1; AAB50545." evidence="5" ref="1">
    <original>L</original>
    <variation>V</variation>
    <location>
        <position position="158"/>
    </location>
</feature>
<feature type="sequence conflict" description="In Ref. 2; BAA08926." evidence="5" ref="2">
    <original>D</original>
    <variation>E</variation>
    <location>
        <position position="295"/>
    </location>
</feature>
<feature type="sequence conflict" description="In Ref. 4; AAH21359." evidence="5" ref="4">
    <original>D</original>
    <variation>N</variation>
    <location>
        <position position="449"/>
    </location>
</feature>
<feature type="sequence conflict" description="In Ref. 2; BAA08926." evidence="5" ref="2">
    <original>A</original>
    <variation>P</variation>
    <location>
        <position position="498"/>
    </location>
</feature>
<feature type="sequence conflict" description="In Ref. 1; AAB50545." evidence="5" ref="1">
    <original>N</original>
    <variation>D</variation>
    <location>
        <position position="582"/>
    </location>
</feature>
<feature type="sequence conflict" description="In Ref. 1; AAB50545." evidence="5" ref="1">
    <original>E</original>
    <variation>G</variation>
    <location>
        <position position="593"/>
    </location>
</feature>
<name>GPDM_MOUSE</name>
<proteinExistence type="evidence at protein level"/>